<reference key="1">
    <citation type="journal article" date="2000" name="Nucleic Acids Res.">
        <title>A role for MHR1, a gene required for mitochondrial genetic recombination, in the repair of damage spontaneously introduced in yeast mtDNA.</title>
        <authorList>
            <person name="Ling F."/>
            <person name="Morioka H."/>
            <person name="Ohtsuka E."/>
            <person name="Shibata T."/>
        </authorList>
    </citation>
    <scope>NUCLEOTIDE SEQUENCE [GENOMIC DNA]</scope>
    <scope>FUNCTION</scope>
</reference>
<reference key="2">
    <citation type="journal article" date="1997" name="Nature">
        <title>The nucleotide sequence of Saccharomyces cerevisiae chromosome IV.</title>
        <authorList>
            <person name="Jacq C."/>
            <person name="Alt-Moerbe J."/>
            <person name="Andre B."/>
            <person name="Arnold W."/>
            <person name="Bahr A."/>
            <person name="Ballesta J.P.G."/>
            <person name="Bargues M."/>
            <person name="Baron L."/>
            <person name="Becker A."/>
            <person name="Biteau N."/>
            <person name="Bloecker H."/>
            <person name="Blugeon C."/>
            <person name="Boskovic J."/>
            <person name="Brandt P."/>
            <person name="Brueckner M."/>
            <person name="Buitrago M.J."/>
            <person name="Coster F."/>
            <person name="Delaveau T."/>
            <person name="del Rey F."/>
            <person name="Dujon B."/>
            <person name="Eide L.G."/>
            <person name="Garcia-Cantalejo J.M."/>
            <person name="Goffeau A."/>
            <person name="Gomez-Peris A."/>
            <person name="Granotier C."/>
            <person name="Hanemann V."/>
            <person name="Hankeln T."/>
            <person name="Hoheisel J.D."/>
            <person name="Jaeger W."/>
            <person name="Jimenez A."/>
            <person name="Jonniaux J.-L."/>
            <person name="Kraemer C."/>
            <person name="Kuester H."/>
            <person name="Laamanen P."/>
            <person name="Legros Y."/>
            <person name="Louis E.J."/>
            <person name="Moeller-Rieker S."/>
            <person name="Monnet A."/>
            <person name="Moro M."/>
            <person name="Mueller-Auer S."/>
            <person name="Nussbaumer B."/>
            <person name="Paricio N."/>
            <person name="Paulin L."/>
            <person name="Perea J."/>
            <person name="Perez-Alonso M."/>
            <person name="Perez-Ortin J.E."/>
            <person name="Pohl T.M."/>
            <person name="Prydz H."/>
            <person name="Purnelle B."/>
            <person name="Rasmussen S.W."/>
            <person name="Remacha M.A."/>
            <person name="Revuelta J.L."/>
            <person name="Rieger M."/>
            <person name="Salom D."/>
            <person name="Saluz H.P."/>
            <person name="Saiz J.E."/>
            <person name="Saren A.-M."/>
            <person name="Schaefer M."/>
            <person name="Scharfe M."/>
            <person name="Schmidt E.R."/>
            <person name="Schneider C."/>
            <person name="Scholler P."/>
            <person name="Schwarz S."/>
            <person name="Soler-Mira A."/>
            <person name="Urrestarazu L.A."/>
            <person name="Verhasselt P."/>
            <person name="Vissers S."/>
            <person name="Voet M."/>
            <person name="Volckaert G."/>
            <person name="Wagner G."/>
            <person name="Wambutt R."/>
            <person name="Wedler E."/>
            <person name="Wedler H."/>
            <person name="Woelfl S."/>
            <person name="Harris D.E."/>
            <person name="Bowman S."/>
            <person name="Brown D."/>
            <person name="Churcher C.M."/>
            <person name="Connor R."/>
            <person name="Dedman K."/>
            <person name="Gentles S."/>
            <person name="Hamlin N."/>
            <person name="Hunt S."/>
            <person name="Jones L."/>
            <person name="McDonald S."/>
            <person name="Murphy L.D."/>
            <person name="Niblett D."/>
            <person name="Odell C."/>
            <person name="Oliver K."/>
            <person name="Rajandream M.A."/>
            <person name="Richards C."/>
            <person name="Shore L."/>
            <person name="Walsh S.V."/>
            <person name="Barrell B.G."/>
            <person name="Dietrich F.S."/>
            <person name="Mulligan J.T."/>
            <person name="Allen E."/>
            <person name="Araujo R."/>
            <person name="Aviles E."/>
            <person name="Berno A."/>
            <person name="Carpenter J."/>
            <person name="Chen E."/>
            <person name="Cherry J.M."/>
            <person name="Chung E."/>
            <person name="Duncan M."/>
            <person name="Hunicke-Smith S."/>
            <person name="Hyman R.W."/>
            <person name="Komp C."/>
            <person name="Lashkari D."/>
            <person name="Lew H."/>
            <person name="Lin D."/>
            <person name="Mosedale D."/>
            <person name="Nakahara K."/>
            <person name="Namath A."/>
            <person name="Oefner P."/>
            <person name="Oh C."/>
            <person name="Petel F.X."/>
            <person name="Roberts D."/>
            <person name="Schramm S."/>
            <person name="Schroeder M."/>
            <person name="Shogren T."/>
            <person name="Shroff N."/>
            <person name="Winant A."/>
            <person name="Yelton M.A."/>
            <person name="Botstein D."/>
            <person name="Davis R.W."/>
            <person name="Johnston M."/>
            <person name="Andrews S."/>
            <person name="Brinkman R."/>
            <person name="Cooper J."/>
            <person name="Ding H."/>
            <person name="Du Z."/>
            <person name="Favello A."/>
            <person name="Fulton L."/>
            <person name="Gattung S."/>
            <person name="Greco T."/>
            <person name="Hallsworth K."/>
            <person name="Hawkins J."/>
            <person name="Hillier L.W."/>
            <person name="Jier M."/>
            <person name="Johnson D."/>
            <person name="Johnston L."/>
            <person name="Kirsten J."/>
            <person name="Kucaba T."/>
            <person name="Langston Y."/>
            <person name="Latreille P."/>
            <person name="Le T."/>
            <person name="Mardis E."/>
            <person name="Menezes S."/>
            <person name="Miller N."/>
            <person name="Nhan M."/>
            <person name="Pauley A."/>
            <person name="Peluso D."/>
            <person name="Rifkin L."/>
            <person name="Riles L."/>
            <person name="Taich A."/>
            <person name="Trevaskis E."/>
            <person name="Vignati D."/>
            <person name="Wilcox L."/>
            <person name="Wohldman P."/>
            <person name="Vaudin M."/>
            <person name="Wilson R."/>
            <person name="Waterston R."/>
            <person name="Albermann K."/>
            <person name="Hani J."/>
            <person name="Heumann K."/>
            <person name="Kleine K."/>
            <person name="Mewes H.-W."/>
            <person name="Zollner A."/>
            <person name="Zaccaria P."/>
        </authorList>
    </citation>
    <scope>NUCLEOTIDE SEQUENCE [LARGE SCALE GENOMIC DNA]</scope>
    <source>
        <strain>ATCC 204508 / S288c</strain>
    </source>
</reference>
<reference key="3">
    <citation type="journal article" date="2014" name="G3 (Bethesda)">
        <title>The reference genome sequence of Saccharomyces cerevisiae: Then and now.</title>
        <authorList>
            <person name="Engel S.R."/>
            <person name="Dietrich F.S."/>
            <person name="Fisk D.G."/>
            <person name="Binkley G."/>
            <person name="Balakrishnan R."/>
            <person name="Costanzo M.C."/>
            <person name="Dwight S.S."/>
            <person name="Hitz B.C."/>
            <person name="Karra K."/>
            <person name="Nash R.S."/>
            <person name="Weng S."/>
            <person name="Wong E.D."/>
            <person name="Lloyd P."/>
            <person name="Skrzypek M.S."/>
            <person name="Miyasato S.R."/>
            <person name="Simison M."/>
            <person name="Cherry J.M."/>
        </authorList>
    </citation>
    <scope>GENOME REANNOTATION</scope>
    <source>
        <strain>ATCC 204508 / S288c</strain>
    </source>
</reference>
<reference key="4">
    <citation type="journal article" date="2007" name="Genome Res.">
        <title>Approaching a complete repository of sequence-verified protein-encoding clones for Saccharomyces cerevisiae.</title>
        <authorList>
            <person name="Hu Y."/>
            <person name="Rolfs A."/>
            <person name="Bhullar B."/>
            <person name="Murthy T.V.S."/>
            <person name="Zhu C."/>
            <person name="Berger M.F."/>
            <person name="Camargo A.A."/>
            <person name="Kelley F."/>
            <person name="McCarron S."/>
            <person name="Jepson D."/>
            <person name="Richardson A."/>
            <person name="Raphael J."/>
            <person name="Moreira D."/>
            <person name="Taycher E."/>
            <person name="Zuo D."/>
            <person name="Mohr S."/>
            <person name="Kane M.F."/>
            <person name="Williamson J."/>
            <person name="Simpson A.J.G."/>
            <person name="Bulyk M.L."/>
            <person name="Harlow E."/>
            <person name="Marsischky G."/>
            <person name="Kolodner R.D."/>
            <person name="LaBaer J."/>
        </authorList>
    </citation>
    <scope>NUCLEOTIDE SEQUENCE [GENOMIC DNA]</scope>
    <source>
        <strain>ATCC 204508 / S288c</strain>
    </source>
</reference>
<reference key="5">
    <citation type="journal article" date="1998" name="Proc. Natl. Acad. Sci. U.S.A.">
        <title>A novel yeast protein influencing the response of RNA polymerase II to transcriptional activators.</title>
        <authorList>
            <person name="Emili A."/>
            <person name="Kobayashi R."/>
            <person name="Ingles C.J."/>
        </authorList>
    </citation>
    <scope>PROTEIN SEQUENCE OF 192-208</scope>
    <scope>FUNCTION</scope>
</reference>
<reference key="6">
    <citation type="journal article" date="1995" name="EMBO J.">
        <title>A nuclear mutation defective in mitochondrial recombination in yeast.</title>
        <authorList>
            <person name="Ling F."/>
            <person name="Makishima F."/>
            <person name="Morishima N."/>
            <person name="Shibata T."/>
        </authorList>
    </citation>
    <scope>FUNCTION</scope>
</reference>
<reference key="7">
    <citation type="journal article" date="2002" name="EMBO J.">
        <title>Recombination-dependent mtDNA partitioning: in vivo role of Mhr1p to promote pairing of homologous DNA.</title>
        <authorList>
            <person name="Ling F."/>
            <person name="Shibata T."/>
        </authorList>
    </citation>
    <scope>FUNCTION</scope>
    <scope>MUTAGENESIS OF GLY-172</scope>
    <scope>SUBCELLULAR LOCATION</scope>
</reference>
<reference key="8">
    <citation type="journal article" date="2002" name="Nucleic Acids Res.">
        <title>The yeast protein Xtc1 functions as a direct transcriptional repressor.</title>
        <authorList>
            <person name="Traven A."/>
            <person name="Staresincic L."/>
            <person name="Arneric M."/>
            <person name="Sopta M."/>
        </authorList>
    </citation>
    <scope>FUNCTION</scope>
    <scope>SUBCELLULAR LOCATION</scope>
</reference>
<reference key="9">
    <citation type="journal article" date="2003" name="Nature">
        <title>Global analysis of protein localization in budding yeast.</title>
        <authorList>
            <person name="Huh W.-K."/>
            <person name="Falvo J.V."/>
            <person name="Gerke L.C."/>
            <person name="Carroll A.S."/>
            <person name="Howson R.W."/>
            <person name="Weissman J.S."/>
            <person name="O'Shea E.K."/>
        </authorList>
    </citation>
    <scope>SUBCELLULAR LOCATION [LARGE SCALE ANALYSIS]</scope>
</reference>
<reference key="10">
    <citation type="journal article" date="2003" name="Nature">
        <title>Global analysis of protein expression in yeast.</title>
        <authorList>
            <person name="Ghaemmaghami S."/>
            <person name="Huh W.-K."/>
            <person name="Bower K."/>
            <person name="Howson R.W."/>
            <person name="Belle A."/>
            <person name="Dephoure N."/>
            <person name="O'Shea E.K."/>
            <person name="Weissman J.S."/>
        </authorList>
    </citation>
    <scope>LEVEL OF PROTEIN EXPRESSION [LARGE SCALE ANALYSIS]</scope>
</reference>
<reference key="11">
    <citation type="journal article" date="2003" name="Proc. Natl. Acad. Sci. U.S.A.">
        <title>The proteome of Saccharomyces cerevisiae mitochondria.</title>
        <authorList>
            <person name="Sickmann A."/>
            <person name="Reinders J."/>
            <person name="Wagner Y."/>
            <person name="Joppich C."/>
            <person name="Zahedi R.P."/>
            <person name="Meyer H.E."/>
            <person name="Schoenfisch B."/>
            <person name="Perschil I."/>
            <person name="Chacinska A."/>
            <person name="Guiard B."/>
            <person name="Rehling P."/>
            <person name="Pfanner N."/>
            <person name="Meisinger C."/>
        </authorList>
    </citation>
    <scope>SUBCELLULAR LOCATION [LARGE SCALE ANALYSIS]</scope>
    <source>
        <strain>ATCC 76625 / YPH499</strain>
    </source>
</reference>
<reference key="12">
    <citation type="journal article" date="2004" name="Mol. Biol. Cell">
        <title>Mhr1p-dependent concatemeric mitochondrial DNA formation for generating yeast mitochondrial homoplasmic cells.</title>
        <authorList>
            <person name="Ling F."/>
            <person name="Shibata T."/>
        </authorList>
    </citation>
    <scope>FUNCTION</scope>
    <scope>MUTAGENESIS OF GLY-172</scope>
</reference>
<reference key="13">
    <citation type="journal article" date="2006" name="Mutat. Res.">
        <title>Overlapping contributions of Msh1p and putative recombination proteins Cce1p, Din7p, and Mhr1p in large-scale recombination and genome sorting events in the mitochondrial genome of Saccharomyces cerevisiae.</title>
        <authorList>
            <person name="Mookerjee S.A."/>
            <person name="Sia E.A."/>
        </authorList>
    </citation>
    <scope>FUNCTION</scope>
</reference>
<reference key="14">
    <citation type="journal article" date="2012" name="Proc. Natl. Acad. Sci. U.S.A.">
        <title>N-terminal acetylome analyses and functional insights of the N-terminal acetyltransferase NatB.</title>
        <authorList>
            <person name="Van Damme P."/>
            <person name="Lasa M."/>
            <person name="Polevoda B."/>
            <person name="Gazquez C."/>
            <person name="Elosegui-Artola A."/>
            <person name="Kim D.S."/>
            <person name="De Juan-Pardo E."/>
            <person name="Demeyer K."/>
            <person name="Hole K."/>
            <person name="Larrea E."/>
            <person name="Timmerman E."/>
            <person name="Prieto J."/>
            <person name="Arnesen T."/>
            <person name="Sherman F."/>
            <person name="Gevaert K."/>
            <person name="Aldabe R."/>
        </authorList>
    </citation>
    <scope>IDENTIFICATION BY MASS SPECTROMETRY [LARGE SCALE ANALYSIS]</scope>
</reference>
<reference key="15">
    <citation type="journal article" date="2015" name="Nat. Commun.">
        <title>Organization of the mitochondrial translation machinery studied in situ by cryoelectron tomography.</title>
        <authorList>
            <person name="Pfeffer S."/>
            <person name="Woellhaf M.W."/>
            <person name="Herrmann J.M."/>
            <person name="Forster F."/>
        </authorList>
    </citation>
    <scope>SUBCELLULAR LOCATION</scope>
</reference>
<reference key="16">
    <citation type="journal article" date="2014" name="Science">
        <title>Structure of the yeast mitochondrial large ribosomal subunit.</title>
        <authorList>
            <person name="Amunts A."/>
            <person name="Brown A."/>
            <person name="Bai X.C."/>
            <person name="Llacer J.L."/>
            <person name="Hussain T."/>
            <person name="Emsley P."/>
            <person name="Long F."/>
            <person name="Murshudov G."/>
            <person name="Scheres S.H."/>
            <person name="Ramakrishnan V."/>
        </authorList>
    </citation>
    <scope>STRUCTURE BY ELECTRON MICROSCOPY (3.20 ANGSTROMS)</scope>
    <scope>SUBUNIT</scope>
</reference>
<name>MHR1_YEAST</name>
<accession>Q06630</accession>
<accession>D6VSS5</accession>
<keyword id="KW-0002">3D-structure</keyword>
<keyword id="KW-0903">Direct protein sequencing</keyword>
<keyword id="KW-0496">Mitochondrion</keyword>
<keyword id="KW-0539">Nucleus</keyword>
<keyword id="KW-1185">Reference proteome</keyword>
<keyword id="KW-0687">Ribonucleoprotein</keyword>
<keyword id="KW-0689">Ribosomal protein</keyword>
<keyword id="KW-0804">Transcription</keyword>
<keyword id="KW-0805">Transcription regulation</keyword>
<sequence length="226" mass="26895">MKVNHSISRFRPASWFEKTKIIPPQVYIFRNLEYGQVLYSQFPNFSQTQVDKLFVRPNWSNRKPSLRRDIWKCMCVVNLQNYKQSVHLYQNLCRLRYLRDVAQRKESDKLRKKDSNGHVWYSGQYRPTYCQEAVADLRESLLKVFENATPAEKQTVPAKKPSIYWEDPWRMGDKDKHWNYDVFNALGLEHKLIQRVGNIAREESVILKELAKLESHPTEQTEVSSQ</sequence>
<organism>
    <name type="scientific">Saccharomyces cerevisiae (strain ATCC 204508 / S288c)</name>
    <name type="common">Baker's yeast</name>
    <dbReference type="NCBI Taxonomy" id="559292"/>
    <lineage>
        <taxon>Eukaryota</taxon>
        <taxon>Fungi</taxon>
        <taxon>Dikarya</taxon>
        <taxon>Ascomycota</taxon>
        <taxon>Saccharomycotina</taxon>
        <taxon>Saccharomycetes</taxon>
        <taxon>Saccharomycetales</taxon>
        <taxon>Saccharomycetaceae</taxon>
        <taxon>Saccharomyces</taxon>
    </lineage>
</organism>
<feature type="chain" id="PRO_0000255967" description="Large ribosomal subunit protein mL67">
    <location>
        <begin position="1"/>
        <end position="226"/>
    </location>
</feature>
<feature type="mutagenesis site" description="In MHR1-1; causes a defect in the partitioning of nascent mtDNA into buds and delays generation of homoplasmic cells." evidence="3 6">
    <original>G</original>
    <variation>D</variation>
    <location>
        <position position="172"/>
    </location>
</feature>
<protein>
    <recommendedName>
        <fullName evidence="13">Large ribosomal subunit protein mL67</fullName>
    </recommendedName>
    <alternativeName>
        <fullName>Cross-linked transcription component 1</fullName>
    </alternativeName>
    <alternativeName>
        <fullName>Mitochondrial homologous recombination protein 1</fullName>
    </alternativeName>
</protein>
<evidence type="ECO:0000269" key="1">
    <source>
    </source>
</evidence>
<evidence type="ECO:0000269" key="2">
    <source>
    </source>
</evidence>
<evidence type="ECO:0000269" key="3">
    <source>
    </source>
</evidence>
<evidence type="ECO:0000269" key="4">
    <source>
    </source>
</evidence>
<evidence type="ECO:0000269" key="5">
    <source>
    </source>
</evidence>
<evidence type="ECO:0000269" key="6">
    <source>
    </source>
</evidence>
<evidence type="ECO:0000269" key="7">
    <source>
    </source>
</evidence>
<evidence type="ECO:0000269" key="8">
    <source>
    </source>
</evidence>
<evidence type="ECO:0000269" key="9">
    <source>
    </source>
</evidence>
<evidence type="ECO:0000269" key="10">
    <source>
    </source>
</evidence>
<evidence type="ECO:0000269" key="11">
    <source>
    </source>
</evidence>
<evidence type="ECO:0000269" key="12">
    <source>
    </source>
</evidence>
<evidence type="ECO:0000303" key="13">
    <source>
    </source>
</evidence>
<evidence type="ECO:0000305" key="14"/>
<evidence type="ECO:0000305" key="15">
    <source>
    </source>
</evidence>
<evidence type="ECO:0000305" key="16">
    <source>
    </source>
</evidence>
<comment type="function">
    <text evidence="1 2 3 6 8 11 12 15 16">Component of the mitochondrial ribosome (mitoribosome), a dedicated translation machinery responsible for the synthesis of mitochondrial genome-encoded proteins, including at least some of the essential transmembrane subunits of the mitochondrial respiratory chain. The mitoribosomes are attached to the mitochondrial inner membrane and translation products are cotranslationally integrated into the membrane (PubMed:24675956, PubMed:25609543). mL67/MHR1 also has extraribosomal functions, being involved in regulation of mitochondrial DNA recombination, maintenance and repair, and generation of homoplasmic cells (PubMed:11121487, PubMed:12198175, PubMed:14565971, PubMed:16337661, PubMed:7664749, PubMed:9736700). mL67/MHR1 also acts as transcription factor involved in regulation of RNA polymerase II-dependent transcription (PubMed:12034822).</text>
</comment>
<comment type="subunit">
    <text evidence="9">Component of the mitochondrial large ribosomal subunit (mt-LSU). Mature yeast 74S mitochondrial ribosomes consist of a small (37S) and a large (54S) subunit. The 37S small subunit contains a 15S ribosomal RNA (15S mt-rRNA) and 34 different proteins. The 54S large subunit contains a 21S rRNA (21S mt-rRNA) and 46 different proteins.</text>
</comment>
<comment type="subcellular location">
    <subcellularLocation>
        <location evidence="2">Nucleus</location>
    </subcellularLocation>
    <subcellularLocation>
        <location evidence="2 3 4 7">Mitochondrion</location>
    </subcellularLocation>
    <text evidence="10">Mitoribosomes are tethered to the mitochondrial inner membrane and spatially aligned with the membrane insertion machinery through two distinct membrane contact sites, formed by the 21S rRNA expansion segment 96-ES1 and the inner membrane protein MBA1.</text>
</comment>
<comment type="miscellaneous">
    <text evidence="5">Present with 2610 molecules/cell in log phase SD medium.</text>
</comment>
<comment type="similarity">
    <text evidence="14">Belongs to the mitochondrion-specific ribosomal protein mL67 family.</text>
</comment>
<proteinExistence type="evidence at protein level"/>
<gene>
    <name type="primary">MHR1</name>
    <name type="synonym">XTC1</name>
    <name type="ordered locus">YDR296W</name>
</gene>
<dbReference type="EMBL" id="AB016430">
    <property type="protein sequence ID" value="BAA88081.1"/>
    <property type="molecule type" value="Genomic_DNA"/>
</dbReference>
<dbReference type="EMBL" id="U28374">
    <property type="protein sequence ID" value="AAB64732.1"/>
    <property type="molecule type" value="Genomic_DNA"/>
</dbReference>
<dbReference type="EMBL" id="AY557735">
    <property type="protein sequence ID" value="AAS56061.1"/>
    <property type="molecule type" value="Genomic_DNA"/>
</dbReference>
<dbReference type="EMBL" id="BK006938">
    <property type="protein sequence ID" value="DAA12135.1"/>
    <property type="molecule type" value="Genomic_DNA"/>
</dbReference>
<dbReference type="PIR" id="S61182">
    <property type="entry name" value="S61182"/>
</dbReference>
<dbReference type="RefSeq" id="NP_010582.3">
    <property type="nucleotide sequence ID" value="NM_001180604.3"/>
</dbReference>
<dbReference type="PDB" id="3J6B">
    <property type="method" value="EM"/>
    <property type="resolution" value="3.20 A"/>
    <property type="chains" value="d=1-226"/>
</dbReference>
<dbReference type="PDB" id="5MRC">
    <property type="method" value="EM"/>
    <property type="resolution" value="3.25 A"/>
    <property type="chains" value="d=1-215"/>
</dbReference>
<dbReference type="PDB" id="5MRE">
    <property type="method" value="EM"/>
    <property type="resolution" value="3.75 A"/>
    <property type="chains" value="d=1-215"/>
</dbReference>
<dbReference type="PDB" id="5MRF">
    <property type="method" value="EM"/>
    <property type="resolution" value="4.97 A"/>
    <property type="chains" value="d=1-215"/>
</dbReference>
<dbReference type="PDBsum" id="3J6B"/>
<dbReference type="PDBsum" id="5MRC"/>
<dbReference type="PDBsum" id="5MRE"/>
<dbReference type="PDBsum" id="5MRF"/>
<dbReference type="BMRB" id="Q06630"/>
<dbReference type="EMDB" id="EMD-3551"/>
<dbReference type="EMDB" id="EMD-3552"/>
<dbReference type="EMDB" id="EMD-3553"/>
<dbReference type="SMR" id="Q06630"/>
<dbReference type="BioGRID" id="32348">
    <property type="interactions" value="144"/>
</dbReference>
<dbReference type="ComplexPortal" id="CPX-1602">
    <property type="entry name" value="54S mitochondrial large ribosomal subunit"/>
</dbReference>
<dbReference type="DIP" id="DIP-5727N"/>
<dbReference type="FunCoup" id="Q06630">
    <property type="interactions" value="191"/>
</dbReference>
<dbReference type="IntAct" id="Q06630">
    <property type="interactions" value="83"/>
</dbReference>
<dbReference type="MINT" id="Q06630"/>
<dbReference type="STRING" id="4932.YDR296W"/>
<dbReference type="iPTMnet" id="Q06630"/>
<dbReference type="PaxDb" id="4932-YDR296W"/>
<dbReference type="PeptideAtlas" id="Q06630"/>
<dbReference type="EnsemblFungi" id="YDR296W_mRNA">
    <property type="protein sequence ID" value="YDR296W"/>
    <property type="gene ID" value="YDR296W"/>
</dbReference>
<dbReference type="GeneID" id="851890"/>
<dbReference type="KEGG" id="sce:YDR296W"/>
<dbReference type="AGR" id="SGD:S000002704"/>
<dbReference type="SGD" id="S000002704">
    <property type="gene designation" value="MHR1"/>
</dbReference>
<dbReference type="VEuPathDB" id="FungiDB:YDR296W"/>
<dbReference type="eggNOG" id="ENOG502QSKX">
    <property type="taxonomic scope" value="Eukaryota"/>
</dbReference>
<dbReference type="HOGENOM" id="CLU_092898_0_0_1"/>
<dbReference type="InParanoid" id="Q06630"/>
<dbReference type="OMA" id="YRPTYTQ"/>
<dbReference type="OrthoDB" id="5333655at2759"/>
<dbReference type="BioCyc" id="YEAST:G3O-29858-MONOMER"/>
<dbReference type="BioGRID-ORCS" id="851890">
    <property type="hits" value="2 hits in 10 CRISPR screens"/>
</dbReference>
<dbReference type="PRO" id="PR:Q06630"/>
<dbReference type="Proteomes" id="UP000002311">
    <property type="component" value="Chromosome IV"/>
</dbReference>
<dbReference type="RNAct" id="Q06630">
    <property type="molecule type" value="protein"/>
</dbReference>
<dbReference type="GO" id="GO:0005743">
    <property type="term" value="C:mitochondrial inner membrane"/>
    <property type="evidence" value="ECO:0000303"/>
    <property type="project" value="ComplexPortal"/>
</dbReference>
<dbReference type="GO" id="GO:0005762">
    <property type="term" value="C:mitochondrial large ribosomal subunit"/>
    <property type="evidence" value="ECO:0000314"/>
    <property type="project" value="SGD"/>
</dbReference>
<dbReference type="GO" id="GO:0005739">
    <property type="term" value="C:mitochondrion"/>
    <property type="evidence" value="ECO:0000314"/>
    <property type="project" value="SGD"/>
</dbReference>
<dbReference type="GO" id="GO:0005634">
    <property type="term" value="C:nucleus"/>
    <property type="evidence" value="ECO:0000314"/>
    <property type="project" value="SGD"/>
</dbReference>
<dbReference type="GO" id="GO:0003677">
    <property type="term" value="F:DNA binding"/>
    <property type="evidence" value="ECO:0000314"/>
    <property type="project" value="SGD"/>
</dbReference>
<dbReference type="GO" id="GO:0000150">
    <property type="term" value="F:DNA strand exchange activity"/>
    <property type="evidence" value="ECO:0000314"/>
    <property type="project" value="SGD"/>
</dbReference>
<dbReference type="GO" id="GO:0003697">
    <property type="term" value="F:single-stranded DNA binding"/>
    <property type="evidence" value="ECO:0000314"/>
    <property type="project" value="SGD"/>
</dbReference>
<dbReference type="GO" id="GO:0003735">
    <property type="term" value="F:structural constituent of ribosome"/>
    <property type="evidence" value="ECO:0000314"/>
    <property type="project" value="SGD"/>
</dbReference>
<dbReference type="GO" id="GO:0034599">
    <property type="term" value="P:cellular response to oxidative stress"/>
    <property type="evidence" value="ECO:0000315"/>
    <property type="project" value="SGD"/>
</dbReference>
<dbReference type="GO" id="GO:0006310">
    <property type="term" value="P:DNA recombination"/>
    <property type="evidence" value="ECO:0000315"/>
    <property type="project" value="SGD"/>
</dbReference>
<dbReference type="GO" id="GO:0000002">
    <property type="term" value="P:mitochondrial genome maintenance"/>
    <property type="evidence" value="ECO:0000314"/>
    <property type="project" value="SGD"/>
</dbReference>
<dbReference type="GO" id="GO:0032543">
    <property type="term" value="P:mitochondrial translation"/>
    <property type="evidence" value="ECO:0000303"/>
    <property type="project" value="ComplexPortal"/>
</dbReference>
<dbReference type="GO" id="GO:0090297">
    <property type="term" value="P:positive regulation of mitochondrial DNA replication"/>
    <property type="evidence" value="ECO:0000315"/>
    <property type="project" value="SGD"/>
</dbReference>
<dbReference type="GO" id="GO:0006355">
    <property type="term" value="P:regulation of DNA-templated transcription"/>
    <property type="evidence" value="ECO:0000353"/>
    <property type="project" value="SGD"/>
</dbReference>
<dbReference type="InterPro" id="IPR024629">
    <property type="entry name" value="Ribosomal_mL67"/>
</dbReference>
<dbReference type="PANTHER" id="PTHR28184:SF1">
    <property type="entry name" value="LARGE RIBOSOMAL SUBUNIT PROTEIN ML67"/>
    <property type="match status" value="1"/>
</dbReference>
<dbReference type="PANTHER" id="PTHR28184">
    <property type="entry name" value="MITOCHONDRIAL HOMOLOGOUS RECOMBINATION PROTEIN 1"/>
    <property type="match status" value="1"/>
</dbReference>
<dbReference type="Pfam" id="PF12829">
    <property type="entry name" value="Mhr1"/>
    <property type="match status" value="1"/>
</dbReference>